<sequence length="210" mass="22295">MELQLAIDLLNKEEATILANKVKDYINIVEIGTPIVINEGLPAVQHLNDNIDGVKVLADLKIMDAADYEVSQAVKFGADIVTILGVAEDASIKAAVDEAHKHGKQLLVDMIAVQDLEKRAKDLDDLGADYIAVHTGYDLQAEGQSPLESLRKVKSVISNSKVAVAGGIKPDTIKDIVAENPDLIIVGGGIANADDPVEAAKQCRAAIEGK</sequence>
<keyword id="KW-0119">Carbohydrate metabolism</keyword>
<keyword id="KW-0456">Lyase</keyword>
<keyword id="KW-0554">One-carbon metabolism</keyword>
<keyword id="KW-1185">Reference proteome</keyword>
<gene>
    <name type="ordered locus">SSP1619</name>
</gene>
<accession>Q49WT7</accession>
<organism>
    <name type="scientific">Staphylococcus saprophyticus subsp. saprophyticus (strain ATCC 15305 / DSM 20229 / NCIMB 8711 / NCTC 7292 / S-41)</name>
    <dbReference type="NCBI Taxonomy" id="342451"/>
    <lineage>
        <taxon>Bacteria</taxon>
        <taxon>Bacillati</taxon>
        <taxon>Bacillota</taxon>
        <taxon>Bacilli</taxon>
        <taxon>Bacillales</taxon>
        <taxon>Staphylococcaceae</taxon>
        <taxon>Staphylococcus</taxon>
    </lineage>
</organism>
<evidence type="ECO:0000250" key="1"/>
<evidence type="ECO:0000305" key="2"/>
<proteinExistence type="inferred from homology"/>
<protein>
    <recommendedName>
        <fullName>3-hexulose-6-phosphate synthase 1</fullName>
        <shortName>HPS 1</shortName>
        <ecNumber>4.1.2.43</ecNumber>
    </recommendedName>
    <alternativeName>
        <fullName>D-arabino-3-hexulose-6-phosphate formaldehyde lyase 1</fullName>
    </alternativeName>
</protein>
<comment type="function">
    <text evidence="1">Catalyzes the condensation of ribulose 5-phosphate with formaldehyde to form 3-hexulose 6-phosphate.</text>
</comment>
<comment type="catalytic activity">
    <reaction>
        <text>D-ribulose 5-phosphate + formaldehyde = D-arabino-hex-3-ulose 6-phosphate</text>
        <dbReference type="Rhea" id="RHEA:25201"/>
        <dbReference type="ChEBI" id="CHEBI:16842"/>
        <dbReference type="ChEBI" id="CHEBI:58121"/>
        <dbReference type="ChEBI" id="CHEBI:58542"/>
        <dbReference type="EC" id="4.1.2.43"/>
    </reaction>
</comment>
<comment type="pathway">
    <text>One-carbon metabolism; formaldehyde assimilation via RuMP pathway; D-fructose 6-phosphate from D-ribulose 5-phosphate and formaldehyde: step 1/2.</text>
</comment>
<comment type="similarity">
    <text evidence="2">Belongs to the HPS/KGPDC family. HPS subfamily.</text>
</comment>
<feature type="chain" id="PRO_0000269527" description="3-hexulose-6-phosphate synthase 1">
    <location>
        <begin position="1"/>
        <end position="210"/>
    </location>
</feature>
<reference key="1">
    <citation type="journal article" date="2005" name="Proc. Natl. Acad. Sci. U.S.A.">
        <title>Whole genome sequence of Staphylococcus saprophyticus reveals the pathogenesis of uncomplicated urinary tract infection.</title>
        <authorList>
            <person name="Kuroda M."/>
            <person name="Yamashita A."/>
            <person name="Hirakawa H."/>
            <person name="Kumano M."/>
            <person name="Morikawa K."/>
            <person name="Higashide M."/>
            <person name="Maruyama A."/>
            <person name="Inose Y."/>
            <person name="Matoba K."/>
            <person name="Toh H."/>
            <person name="Kuhara S."/>
            <person name="Hattori M."/>
            <person name="Ohta T."/>
        </authorList>
    </citation>
    <scope>NUCLEOTIDE SEQUENCE [LARGE SCALE GENOMIC DNA]</scope>
    <source>
        <strain>ATCC 15305 / DSM 20229 / NCIMB 8711 / NCTC 7292 / S-41</strain>
    </source>
</reference>
<dbReference type="EC" id="4.1.2.43"/>
<dbReference type="EMBL" id="AP008934">
    <property type="protein sequence ID" value="BAE18764.1"/>
    <property type="molecule type" value="Genomic_DNA"/>
</dbReference>
<dbReference type="RefSeq" id="WP_011303356.1">
    <property type="nucleotide sequence ID" value="NC_007350.1"/>
</dbReference>
<dbReference type="SMR" id="Q49WT7"/>
<dbReference type="GeneID" id="3615226"/>
<dbReference type="KEGG" id="ssp:SSP1619"/>
<dbReference type="PATRIC" id="fig|342451.11.peg.1618"/>
<dbReference type="eggNOG" id="COG0269">
    <property type="taxonomic scope" value="Bacteria"/>
</dbReference>
<dbReference type="HOGENOM" id="CLU_081825_1_0_9"/>
<dbReference type="OrthoDB" id="43475at2"/>
<dbReference type="UniPathway" id="UPA00294">
    <property type="reaction ID" value="UER00434"/>
</dbReference>
<dbReference type="Proteomes" id="UP000006371">
    <property type="component" value="Chromosome"/>
</dbReference>
<dbReference type="GO" id="GO:0033982">
    <property type="term" value="F:3-dehydro-L-gulonate-6-phosphate decarboxylase activity"/>
    <property type="evidence" value="ECO:0007669"/>
    <property type="project" value="TreeGrafter"/>
</dbReference>
<dbReference type="GO" id="GO:0043801">
    <property type="term" value="F:hexulose-6-phosphate synthase activity"/>
    <property type="evidence" value="ECO:0007669"/>
    <property type="project" value="UniProtKB-EC"/>
</dbReference>
<dbReference type="GO" id="GO:0004590">
    <property type="term" value="F:orotidine-5'-phosphate decarboxylase activity"/>
    <property type="evidence" value="ECO:0007669"/>
    <property type="project" value="InterPro"/>
</dbReference>
<dbReference type="GO" id="GO:0006207">
    <property type="term" value="P:'de novo' pyrimidine nucleobase biosynthetic process"/>
    <property type="evidence" value="ECO:0007669"/>
    <property type="project" value="InterPro"/>
</dbReference>
<dbReference type="GO" id="GO:0019647">
    <property type="term" value="P:formaldehyde assimilation via ribulose monophosphate cycle"/>
    <property type="evidence" value="ECO:0007669"/>
    <property type="project" value="UniProtKB-UniPathway"/>
</dbReference>
<dbReference type="GO" id="GO:0019854">
    <property type="term" value="P:L-ascorbic acid catabolic process"/>
    <property type="evidence" value="ECO:0007669"/>
    <property type="project" value="TreeGrafter"/>
</dbReference>
<dbReference type="GO" id="GO:0006730">
    <property type="term" value="P:one-carbon metabolic process"/>
    <property type="evidence" value="ECO:0007669"/>
    <property type="project" value="UniProtKB-KW"/>
</dbReference>
<dbReference type="CDD" id="cd04726">
    <property type="entry name" value="KGPDC_HPS"/>
    <property type="match status" value="1"/>
</dbReference>
<dbReference type="FunFam" id="3.20.20.70:FF:000022">
    <property type="entry name" value="3-keto-L-gulonate-6-phosphate decarboxylase UlaD"/>
    <property type="match status" value="1"/>
</dbReference>
<dbReference type="Gene3D" id="3.20.20.70">
    <property type="entry name" value="Aldolase class I"/>
    <property type="match status" value="1"/>
</dbReference>
<dbReference type="InterPro" id="IPR017553">
    <property type="entry name" value="3-hexulose-6-phosphate_synth"/>
</dbReference>
<dbReference type="InterPro" id="IPR013785">
    <property type="entry name" value="Aldolase_TIM"/>
</dbReference>
<dbReference type="InterPro" id="IPR041710">
    <property type="entry name" value="HPS/KGPDC"/>
</dbReference>
<dbReference type="InterPro" id="IPR001754">
    <property type="entry name" value="OMPdeCOase_dom"/>
</dbReference>
<dbReference type="InterPro" id="IPR011060">
    <property type="entry name" value="RibuloseP-bd_barrel"/>
</dbReference>
<dbReference type="NCBIfam" id="TIGR03128">
    <property type="entry name" value="RuMP_HxlA"/>
    <property type="match status" value="1"/>
</dbReference>
<dbReference type="PANTHER" id="PTHR35039">
    <property type="entry name" value="3-KETO-L-GULONATE-6-PHOSPHATE DECARBOXYLASE SGBH-RELATED"/>
    <property type="match status" value="1"/>
</dbReference>
<dbReference type="PANTHER" id="PTHR35039:SF3">
    <property type="entry name" value="3-KETO-L-GULONATE-6-PHOSPHATE DECARBOXYLASE SGBH-RELATED"/>
    <property type="match status" value="1"/>
</dbReference>
<dbReference type="Pfam" id="PF00215">
    <property type="entry name" value="OMPdecase"/>
    <property type="match status" value="1"/>
</dbReference>
<dbReference type="SMART" id="SM00934">
    <property type="entry name" value="OMPdecase"/>
    <property type="match status" value="1"/>
</dbReference>
<dbReference type="SUPFAM" id="SSF51366">
    <property type="entry name" value="Ribulose-phoshate binding barrel"/>
    <property type="match status" value="1"/>
</dbReference>
<name>HPS1_STAS1</name>